<dbReference type="EC" id="7.1.2.2" evidence="1"/>
<dbReference type="EMBL" id="CP000814">
    <property type="protein sequence ID" value="ABV51699.1"/>
    <property type="molecule type" value="Genomic_DNA"/>
</dbReference>
<dbReference type="RefSeq" id="WP_002852005.1">
    <property type="nucleotide sequence ID" value="NC_009839.1"/>
</dbReference>
<dbReference type="SMR" id="A8FJR2"/>
<dbReference type="KEGG" id="cju:C8J_0100"/>
<dbReference type="HOGENOM" id="CLU_022398_0_2_7"/>
<dbReference type="GO" id="GO:0005886">
    <property type="term" value="C:plasma membrane"/>
    <property type="evidence" value="ECO:0007669"/>
    <property type="project" value="UniProtKB-SubCell"/>
</dbReference>
<dbReference type="GO" id="GO:0045259">
    <property type="term" value="C:proton-transporting ATP synthase complex"/>
    <property type="evidence" value="ECO:0007669"/>
    <property type="project" value="UniProtKB-KW"/>
</dbReference>
<dbReference type="GO" id="GO:0005524">
    <property type="term" value="F:ATP binding"/>
    <property type="evidence" value="ECO:0007669"/>
    <property type="project" value="UniProtKB-UniRule"/>
</dbReference>
<dbReference type="GO" id="GO:0016887">
    <property type="term" value="F:ATP hydrolysis activity"/>
    <property type="evidence" value="ECO:0007669"/>
    <property type="project" value="InterPro"/>
</dbReference>
<dbReference type="GO" id="GO:0046933">
    <property type="term" value="F:proton-transporting ATP synthase activity, rotational mechanism"/>
    <property type="evidence" value="ECO:0007669"/>
    <property type="project" value="UniProtKB-UniRule"/>
</dbReference>
<dbReference type="CDD" id="cd18110">
    <property type="entry name" value="ATP-synt_F1_beta_C"/>
    <property type="match status" value="1"/>
</dbReference>
<dbReference type="CDD" id="cd18115">
    <property type="entry name" value="ATP-synt_F1_beta_N"/>
    <property type="match status" value="1"/>
</dbReference>
<dbReference type="CDD" id="cd01133">
    <property type="entry name" value="F1-ATPase_beta_CD"/>
    <property type="match status" value="1"/>
</dbReference>
<dbReference type="FunFam" id="1.10.1140.10:FF:000001">
    <property type="entry name" value="ATP synthase subunit beta"/>
    <property type="match status" value="1"/>
</dbReference>
<dbReference type="FunFam" id="3.40.50.300:FF:000004">
    <property type="entry name" value="ATP synthase subunit beta"/>
    <property type="match status" value="1"/>
</dbReference>
<dbReference type="Gene3D" id="2.40.10.170">
    <property type="match status" value="1"/>
</dbReference>
<dbReference type="Gene3D" id="1.10.1140.10">
    <property type="entry name" value="Bovine Mitochondrial F1-atpase, Atp Synthase Beta Chain, Chain D, domain 3"/>
    <property type="match status" value="1"/>
</dbReference>
<dbReference type="Gene3D" id="3.40.50.300">
    <property type="entry name" value="P-loop containing nucleotide triphosphate hydrolases"/>
    <property type="match status" value="1"/>
</dbReference>
<dbReference type="HAMAP" id="MF_01347">
    <property type="entry name" value="ATP_synth_beta_bact"/>
    <property type="match status" value="1"/>
</dbReference>
<dbReference type="InterPro" id="IPR003593">
    <property type="entry name" value="AAA+_ATPase"/>
</dbReference>
<dbReference type="InterPro" id="IPR055190">
    <property type="entry name" value="ATP-synt_VA_C"/>
</dbReference>
<dbReference type="InterPro" id="IPR005722">
    <property type="entry name" value="ATP_synth_F1_bsu"/>
</dbReference>
<dbReference type="InterPro" id="IPR020003">
    <property type="entry name" value="ATPase_a/bsu_AS"/>
</dbReference>
<dbReference type="InterPro" id="IPR050053">
    <property type="entry name" value="ATPase_alpha/beta_chains"/>
</dbReference>
<dbReference type="InterPro" id="IPR004100">
    <property type="entry name" value="ATPase_F1/V1/A1_a/bsu_N"/>
</dbReference>
<dbReference type="InterPro" id="IPR036121">
    <property type="entry name" value="ATPase_F1/V1/A1_a/bsu_N_sf"/>
</dbReference>
<dbReference type="InterPro" id="IPR000194">
    <property type="entry name" value="ATPase_F1/V1/A1_a/bsu_nucl-bd"/>
</dbReference>
<dbReference type="InterPro" id="IPR024034">
    <property type="entry name" value="ATPase_F1/V1_b/a_C"/>
</dbReference>
<dbReference type="InterPro" id="IPR027417">
    <property type="entry name" value="P-loop_NTPase"/>
</dbReference>
<dbReference type="NCBIfam" id="TIGR01039">
    <property type="entry name" value="atpD"/>
    <property type="match status" value="1"/>
</dbReference>
<dbReference type="PANTHER" id="PTHR15184">
    <property type="entry name" value="ATP SYNTHASE"/>
    <property type="match status" value="1"/>
</dbReference>
<dbReference type="PANTHER" id="PTHR15184:SF71">
    <property type="entry name" value="ATP SYNTHASE SUBUNIT BETA, MITOCHONDRIAL"/>
    <property type="match status" value="1"/>
</dbReference>
<dbReference type="Pfam" id="PF00006">
    <property type="entry name" value="ATP-synt_ab"/>
    <property type="match status" value="1"/>
</dbReference>
<dbReference type="Pfam" id="PF02874">
    <property type="entry name" value="ATP-synt_ab_N"/>
    <property type="match status" value="1"/>
</dbReference>
<dbReference type="Pfam" id="PF22919">
    <property type="entry name" value="ATP-synt_VA_C"/>
    <property type="match status" value="1"/>
</dbReference>
<dbReference type="SMART" id="SM00382">
    <property type="entry name" value="AAA"/>
    <property type="match status" value="1"/>
</dbReference>
<dbReference type="SUPFAM" id="SSF47917">
    <property type="entry name" value="C-terminal domain of alpha and beta subunits of F1 ATP synthase"/>
    <property type="match status" value="1"/>
</dbReference>
<dbReference type="SUPFAM" id="SSF50615">
    <property type="entry name" value="N-terminal domain of alpha and beta subunits of F1 ATP synthase"/>
    <property type="match status" value="1"/>
</dbReference>
<dbReference type="SUPFAM" id="SSF52540">
    <property type="entry name" value="P-loop containing nucleoside triphosphate hydrolases"/>
    <property type="match status" value="1"/>
</dbReference>
<dbReference type="PROSITE" id="PS00152">
    <property type="entry name" value="ATPASE_ALPHA_BETA"/>
    <property type="match status" value="1"/>
</dbReference>
<organism>
    <name type="scientific">Campylobacter jejuni subsp. jejuni serotype O:6 (strain 81116 / NCTC 11828)</name>
    <dbReference type="NCBI Taxonomy" id="407148"/>
    <lineage>
        <taxon>Bacteria</taxon>
        <taxon>Pseudomonadati</taxon>
        <taxon>Campylobacterota</taxon>
        <taxon>Epsilonproteobacteria</taxon>
        <taxon>Campylobacterales</taxon>
        <taxon>Campylobacteraceae</taxon>
        <taxon>Campylobacter</taxon>
    </lineage>
</organism>
<reference key="1">
    <citation type="journal article" date="2007" name="J. Bacteriol.">
        <title>The complete genome sequence of Campylobacter jejuni strain 81116 (NCTC11828).</title>
        <authorList>
            <person name="Pearson B.M."/>
            <person name="Gaskin D.J.H."/>
            <person name="Segers R.P.A.M."/>
            <person name="Wells J.M."/>
            <person name="Nuijten P.J.M."/>
            <person name="van Vliet A.H.M."/>
        </authorList>
    </citation>
    <scope>NUCLEOTIDE SEQUENCE [LARGE SCALE GENOMIC DNA]</scope>
    <source>
        <strain>81116 / NCTC 11828</strain>
    </source>
</reference>
<sequence>MQGFISQVLGPVVDVDFNDYLPQINEAIVVNFESEGKKHKLVLEVAAHLGDNRVRTIAMDMTDGLVRGLKAEALGAPISVPVGEKVLGRIFNVTGDLIDEGEEISFDKKWAIHRDPPAFEDQSTKSEIFETGIKVVDLLAPYAKGGKVGLFGGAGVGKTVIIMELIHNVAFKHSGYSVFAGVGERTREGNDLYNEMKESNVLDKVALCYGQMNEPPGARNRIALTGLTMAEYFRDEMGLDVLMFIDNIFRFSQSGSEMSALLGRIPSAVGYQPTLASEMGKFQERITSTKKGSITSVQAVYVPADDLTDPAPATVFAHLDATTVLNRAIAEKGIYPAVDPLDSTSRMLDPNIIGEEHYKVARGVQSVLQKYKDLQDIIAILGMDELSEEDKLVVERARKIEKFLSQPFFVAEVFTGSPGKYISLEDTIAGFKGILEGKYDHLPENAFYMVGNIDEAIAKADKLKG</sequence>
<keyword id="KW-0066">ATP synthesis</keyword>
<keyword id="KW-0067">ATP-binding</keyword>
<keyword id="KW-0997">Cell inner membrane</keyword>
<keyword id="KW-1003">Cell membrane</keyword>
<keyword id="KW-0139">CF(1)</keyword>
<keyword id="KW-0375">Hydrogen ion transport</keyword>
<keyword id="KW-0406">Ion transport</keyword>
<keyword id="KW-0472">Membrane</keyword>
<keyword id="KW-0547">Nucleotide-binding</keyword>
<keyword id="KW-1278">Translocase</keyword>
<keyword id="KW-0813">Transport</keyword>
<accession>A8FJR2</accession>
<name>ATPB_CAMJ8</name>
<protein>
    <recommendedName>
        <fullName evidence="1">ATP synthase subunit beta</fullName>
        <ecNumber evidence="1">7.1.2.2</ecNumber>
    </recommendedName>
    <alternativeName>
        <fullName evidence="1">ATP synthase F1 sector subunit beta</fullName>
    </alternativeName>
    <alternativeName>
        <fullName evidence="1">F-ATPase subunit beta</fullName>
    </alternativeName>
</protein>
<proteinExistence type="inferred from homology"/>
<gene>
    <name evidence="1" type="primary">atpD</name>
    <name type="ordered locus">C8J_0100</name>
</gene>
<feature type="chain" id="PRO_0000339508" description="ATP synthase subunit beta">
    <location>
        <begin position="1"/>
        <end position="465"/>
    </location>
</feature>
<feature type="binding site" evidence="1">
    <location>
        <begin position="152"/>
        <end position="159"/>
    </location>
    <ligand>
        <name>ATP</name>
        <dbReference type="ChEBI" id="CHEBI:30616"/>
    </ligand>
</feature>
<evidence type="ECO:0000255" key="1">
    <source>
        <dbReference type="HAMAP-Rule" id="MF_01347"/>
    </source>
</evidence>
<comment type="function">
    <text evidence="1">Produces ATP from ADP in the presence of a proton gradient across the membrane. The catalytic sites are hosted primarily by the beta subunits.</text>
</comment>
<comment type="catalytic activity">
    <reaction evidence="1">
        <text>ATP + H2O + 4 H(+)(in) = ADP + phosphate + 5 H(+)(out)</text>
        <dbReference type="Rhea" id="RHEA:57720"/>
        <dbReference type="ChEBI" id="CHEBI:15377"/>
        <dbReference type="ChEBI" id="CHEBI:15378"/>
        <dbReference type="ChEBI" id="CHEBI:30616"/>
        <dbReference type="ChEBI" id="CHEBI:43474"/>
        <dbReference type="ChEBI" id="CHEBI:456216"/>
        <dbReference type="EC" id="7.1.2.2"/>
    </reaction>
</comment>
<comment type="subunit">
    <text evidence="1">F-type ATPases have 2 components, CF(1) - the catalytic core - and CF(0) - the membrane proton channel. CF(1) has five subunits: alpha(3), beta(3), gamma(1), delta(1), epsilon(1). CF(0) has three main subunits: a(1), b(2) and c(9-12). The alpha and beta chains form an alternating ring which encloses part of the gamma chain. CF(1) is attached to CF(0) by a central stalk formed by the gamma and epsilon chains, while a peripheral stalk is formed by the delta and b chains.</text>
</comment>
<comment type="subcellular location">
    <subcellularLocation>
        <location evidence="1">Cell inner membrane</location>
        <topology evidence="1">Peripheral membrane protein</topology>
    </subcellularLocation>
</comment>
<comment type="similarity">
    <text evidence="1">Belongs to the ATPase alpha/beta chains family.</text>
</comment>